<reference key="1">
    <citation type="journal article" date="2007" name="PLoS Genet.">
        <title>A tale of two oxidation states: bacterial colonization of arsenic-rich environments.</title>
        <authorList>
            <person name="Muller D."/>
            <person name="Medigue C."/>
            <person name="Koechler S."/>
            <person name="Barbe V."/>
            <person name="Barakat M."/>
            <person name="Talla E."/>
            <person name="Bonnefoy V."/>
            <person name="Krin E."/>
            <person name="Arsene-Ploetze F."/>
            <person name="Carapito C."/>
            <person name="Chandler M."/>
            <person name="Cournoyer B."/>
            <person name="Cruveiller S."/>
            <person name="Dossat C."/>
            <person name="Duval S."/>
            <person name="Heymann M."/>
            <person name="Leize E."/>
            <person name="Lieutaud A."/>
            <person name="Lievremont D."/>
            <person name="Makita Y."/>
            <person name="Mangenot S."/>
            <person name="Nitschke W."/>
            <person name="Ortet P."/>
            <person name="Perdrial N."/>
            <person name="Schoepp B."/>
            <person name="Siguier P."/>
            <person name="Simeonova D.D."/>
            <person name="Rouy Z."/>
            <person name="Segurens B."/>
            <person name="Turlin E."/>
            <person name="Vallenet D."/>
            <person name="van Dorsselaer A."/>
            <person name="Weiss S."/>
            <person name="Weissenbach J."/>
            <person name="Lett M.-C."/>
            <person name="Danchin A."/>
            <person name="Bertin P.N."/>
        </authorList>
    </citation>
    <scope>NUCLEOTIDE SEQUENCE [LARGE SCALE GENOMIC DNA]</scope>
    <source>
        <strain>ULPAs1</strain>
    </source>
</reference>
<feature type="chain" id="PRO_1000044862" description="Chaperone protein HscA homolog">
    <location>
        <begin position="1"/>
        <end position="620"/>
    </location>
</feature>
<name>HSCA_HERAR</name>
<accession>A4G782</accession>
<proteinExistence type="inferred from homology"/>
<evidence type="ECO:0000255" key="1">
    <source>
        <dbReference type="HAMAP-Rule" id="MF_00679"/>
    </source>
</evidence>
<gene>
    <name evidence="1" type="primary">hscA</name>
    <name type="ordered locus">HEAR2235</name>
</gene>
<keyword id="KW-0067">ATP-binding</keyword>
<keyword id="KW-0143">Chaperone</keyword>
<keyword id="KW-0547">Nucleotide-binding</keyword>
<keyword id="KW-1185">Reference proteome</keyword>
<dbReference type="EMBL" id="CU207211">
    <property type="protein sequence ID" value="CAL62369.1"/>
    <property type="molecule type" value="Genomic_DNA"/>
</dbReference>
<dbReference type="SMR" id="A4G782"/>
<dbReference type="STRING" id="204773.HEAR2235"/>
<dbReference type="KEGG" id="har:HEAR2235"/>
<dbReference type="eggNOG" id="COG0443">
    <property type="taxonomic scope" value="Bacteria"/>
</dbReference>
<dbReference type="HOGENOM" id="CLU_005965_2_4_4"/>
<dbReference type="OrthoDB" id="9766019at2"/>
<dbReference type="Proteomes" id="UP000006697">
    <property type="component" value="Chromosome"/>
</dbReference>
<dbReference type="GO" id="GO:0005524">
    <property type="term" value="F:ATP binding"/>
    <property type="evidence" value="ECO:0007669"/>
    <property type="project" value="UniProtKB-KW"/>
</dbReference>
<dbReference type="GO" id="GO:0016887">
    <property type="term" value="F:ATP hydrolysis activity"/>
    <property type="evidence" value="ECO:0007669"/>
    <property type="project" value="UniProtKB-UniRule"/>
</dbReference>
<dbReference type="GO" id="GO:0140662">
    <property type="term" value="F:ATP-dependent protein folding chaperone"/>
    <property type="evidence" value="ECO:0007669"/>
    <property type="project" value="InterPro"/>
</dbReference>
<dbReference type="GO" id="GO:0051082">
    <property type="term" value="F:unfolded protein binding"/>
    <property type="evidence" value="ECO:0007669"/>
    <property type="project" value="InterPro"/>
</dbReference>
<dbReference type="GO" id="GO:0016226">
    <property type="term" value="P:iron-sulfur cluster assembly"/>
    <property type="evidence" value="ECO:0007669"/>
    <property type="project" value="InterPro"/>
</dbReference>
<dbReference type="FunFam" id="3.30.420.40:FF:000046">
    <property type="entry name" value="Chaperone protein HscA"/>
    <property type="match status" value="1"/>
</dbReference>
<dbReference type="FunFam" id="2.60.34.10:FF:000005">
    <property type="entry name" value="Chaperone protein HscA homolog"/>
    <property type="match status" value="1"/>
</dbReference>
<dbReference type="Gene3D" id="1.20.1270.10">
    <property type="match status" value="1"/>
</dbReference>
<dbReference type="Gene3D" id="3.30.420.40">
    <property type="match status" value="2"/>
</dbReference>
<dbReference type="Gene3D" id="3.90.640.10">
    <property type="entry name" value="Actin, Chain A, domain 4"/>
    <property type="match status" value="1"/>
</dbReference>
<dbReference type="Gene3D" id="2.60.34.10">
    <property type="entry name" value="Substrate Binding Domain Of DNAk, Chain A, domain 1"/>
    <property type="match status" value="1"/>
</dbReference>
<dbReference type="HAMAP" id="MF_00679">
    <property type="entry name" value="HscA"/>
    <property type="match status" value="1"/>
</dbReference>
<dbReference type="InterPro" id="IPR043129">
    <property type="entry name" value="ATPase_NBD"/>
</dbReference>
<dbReference type="InterPro" id="IPR018181">
    <property type="entry name" value="Heat_shock_70_CS"/>
</dbReference>
<dbReference type="InterPro" id="IPR029048">
    <property type="entry name" value="HSP70_C_sf"/>
</dbReference>
<dbReference type="InterPro" id="IPR029047">
    <property type="entry name" value="HSP70_peptide-bd_sf"/>
</dbReference>
<dbReference type="InterPro" id="IPR013126">
    <property type="entry name" value="Hsp_70_fam"/>
</dbReference>
<dbReference type="InterPro" id="IPR010236">
    <property type="entry name" value="ISC_FeS_clus_asmbl_HscA"/>
</dbReference>
<dbReference type="NCBIfam" id="TIGR01991">
    <property type="entry name" value="HscA"/>
    <property type="match status" value="1"/>
</dbReference>
<dbReference type="NCBIfam" id="NF003520">
    <property type="entry name" value="PRK05183.1"/>
    <property type="match status" value="1"/>
</dbReference>
<dbReference type="PANTHER" id="PTHR19375">
    <property type="entry name" value="HEAT SHOCK PROTEIN 70KDA"/>
    <property type="match status" value="1"/>
</dbReference>
<dbReference type="Pfam" id="PF00012">
    <property type="entry name" value="HSP70"/>
    <property type="match status" value="1"/>
</dbReference>
<dbReference type="PRINTS" id="PR00301">
    <property type="entry name" value="HEATSHOCK70"/>
</dbReference>
<dbReference type="SUPFAM" id="SSF53067">
    <property type="entry name" value="Actin-like ATPase domain"/>
    <property type="match status" value="2"/>
</dbReference>
<dbReference type="SUPFAM" id="SSF100934">
    <property type="entry name" value="Heat shock protein 70kD (HSP70), C-terminal subdomain"/>
    <property type="match status" value="1"/>
</dbReference>
<dbReference type="SUPFAM" id="SSF100920">
    <property type="entry name" value="Heat shock protein 70kD (HSP70), peptide-binding domain"/>
    <property type="match status" value="1"/>
</dbReference>
<dbReference type="PROSITE" id="PS00297">
    <property type="entry name" value="HSP70_1"/>
    <property type="match status" value="1"/>
</dbReference>
<dbReference type="PROSITE" id="PS00329">
    <property type="entry name" value="HSP70_2"/>
    <property type="match status" value="1"/>
</dbReference>
<dbReference type="PROSITE" id="PS01036">
    <property type="entry name" value="HSP70_3"/>
    <property type="match status" value="1"/>
</dbReference>
<comment type="function">
    <text evidence="1">Chaperone involved in the maturation of iron-sulfur cluster-containing proteins. Has a low intrinsic ATPase activity which is markedly stimulated by HscB.</text>
</comment>
<comment type="similarity">
    <text evidence="1">Belongs to the heat shock protein 70 family.</text>
</comment>
<sequence>MALLQIAEPGMSTAPHQHRLAVGIDLGTTNSLVATVRNSIPEILTDEEGRSLLPSVVHYLKNGSAHIGYKAQAAQNTDPKNTIVSVKRFMGRGLKDIAYAENLPYDFLDTPGMVQLKTVAGVKSPVEVSAEILATLRQQAEDALGDDLVGAVITVPAYFDDAQRQATKDAAKLAGLNVLRLLNEPTAAAIAYGLDNGSEGVFAVYDLGGGTFDVSILKLTKGVFEVLSTGGDSALGGDDFDHRLFCWIIEQAGLAPLSEIDTSVLMVKAREAKELLSSKSETLIDAVLTSGEEVHVTVTAADFIQMTQHLVTKTITPTKKALRDAGLSVDDVDGVVMVGGATRMPHIRKAVGDFFQSTPLANIDPDKVVALGAAVQANLLAGNRAAGDDWLLLDVIPLSLGIETMGGLVEKVIPRNSTIPCARAQEFTTFKDGQTALAVHIVQGERELVTDCRSLAKFELRGIPPMAAGAARIRVTYQVDADGLLSVSARELRSGVEASISVKPSYGLADDQIAQMLQDSFKSADVDMAARALREEQVEAERIVLATQSALDADASLLSDNEREDIVALLDSVRQAGSGTDHLAIKAAVDALAHGTEEFAARRMDRSVRSALSGKKLDEI</sequence>
<organism>
    <name type="scientific">Herminiimonas arsenicoxydans</name>
    <dbReference type="NCBI Taxonomy" id="204773"/>
    <lineage>
        <taxon>Bacteria</taxon>
        <taxon>Pseudomonadati</taxon>
        <taxon>Pseudomonadota</taxon>
        <taxon>Betaproteobacteria</taxon>
        <taxon>Burkholderiales</taxon>
        <taxon>Oxalobacteraceae</taxon>
        <taxon>Herminiimonas</taxon>
    </lineage>
</organism>
<protein>
    <recommendedName>
        <fullName evidence="1">Chaperone protein HscA homolog</fullName>
    </recommendedName>
</protein>